<evidence type="ECO:0000255" key="1">
    <source>
        <dbReference type="HAMAP-Rule" id="MF_00984"/>
    </source>
</evidence>
<evidence type="ECO:0000256" key="2">
    <source>
        <dbReference type="SAM" id="MobiDB-lite"/>
    </source>
</evidence>
<organism>
    <name type="scientific">Listeria innocua serovar 6a (strain ATCC BAA-680 / CLIP 11262)</name>
    <dbReference type="NCBI Taxonomy" id="272626"/>
    <lineage>
        <taxon>Bacteria</taxon>
        <taxon>Bacillati</taxon>
        <taxon>Bacillota</taxon>
        <taxon>Bacilli</taxon>
        <taxon>Bacillales</taxon>
        <taxon>Listeriaceae</taxon>
        <taxon>Listeria</taxon>
    </lineage>
</organism>
<feature type="chain" id="PRO_0000096058" description="Single-stranded DNA-binding protein 2">
    <location>
        <begin position="1"/>
        <end position="159"/>
    </location>
</feature>
<feature type="domain" description="SSB" evidence="1">
    <location>
        <begin position="2"/>
        <end position="104"/>
    </location>
</feature>
<feature type="region of interest" description="Disordered" evidence="2">
    <location>
        <begin position="106"/>
        <end position="159"/>
    </location>
</feature>
<feature type="compositionally biased region" description="Low complexity" evidence="2">
    <location>
        <begin position="114"/>
        <end position="127"/>
    </location>
</feature>
<feature type="compositionally biased region" description="Polar residues" evidence="2">
    <location>
        <begin position="128"/>
        <end position="143"/>
    </location>
</feature>
<reference key="1">
    <citation type="journal article" date="2001" name="Science">
        <title>Comparative genomics of Listeria species.</title>
        <authorList>
            <person name="Glaser P."/>
            <person name="Frangeul L."/>
            <person name="Buchrieser C."/>
            <person name="Rusniok C."/>
            <person name="Amend A."/>
            <person name="Baquero F."/>
            <person name="Berche P."/>
            <person name="Bloecker H."/>
            <person name="Brandt P."/>
            <person name="Chakraborty T."/>
            <person name="Charbit A."/>
            <person name="Chetouani F."/>
            <person name="Couve E."/>
            <person name="de Daruvar A."/>
            <person name="Dehoux P."/>
            <person name="Domann E."/>
            <person name="Dominguez-Bernal G."/>
            <person name="Duchaud E."/>
            <person name="Durant L."/>
            <person name="Dussurget O."/>
            <person name="Entian K.-D."/>
            <person name="Fsihi H."/>
            <person name="Garcia-del Portillo F."/>
            <person name="Garrido P."/>
            <person name="Gautier L."/>
            <person name="Goebel W."/>
            <person name="Gomez-Lopez N."/>
            <person name="Hain T."/>
            <person name="Hauf J."/>
            <person name="Jackson D."/>
            <person name="Jones L.-M."/>
            <person name="Kaerst U."/>
            <person name="Kreft J."/>
            <person name="Kuhn M."/>
            <person name="Kunst F."/>
            <person name="Kurapkat G."/>
            <person name="Madueno E."/>
            <person name="Maitournam A."/>
            <person name="Mata Vicente J."/>
            <person name="Ng E."/>
            <person name="Nedjari H."/>
            <person name="Nordsiek G."/>
            <person name="Novella S."/>
            <person name="de Pablos B."/>
            <person name="Perez-Diaz J.-C."/>
            <person name="Purcell R."/>
            <person name="Remmel B."/>
            <person name="Rose M."/>
            <person name="Schlueter T."/>
            <person name="Simoes N."/>
            <person name="Tierrez A."/>
            <person name="Vazquez-Boland J.-A."/>
            <person name="Voss H."/>
            <person name="Wehland J."/>
            <person name="Cossart P."/>
        </authorList>
    </citation>
    <scope>NUCLEOTIDE SEQUENCE [LARGE SCALE GENOMIC DNA]</scope>
    <source>
        <strain>ATCC BAA-680 / CLIP 11262</strain>
    </source>
</reference>
<protein>
    <recommendedName>
        <fullName evidence="1">Single-stranded DNA-binding protein 2</fullName>
        <shortName evidence="1">SSB 2</shortName>
    </recommendedName>
</protein>
<accession>Q92FK7</accession>
<sequence>MMNRVVLVGRLTKDPDLRYTPAGAAVATFTLAVNRTFTNQQGEREADFIQCVVWRKPAENAANFLKKGSMAGVDGRIQTRNYEDSDGKRVFVTEVVAESVQFLEPRNHAEGATSNNYQNEANYSNNNKTSSYRADTSQKSDSFANEGKPIDINPDDLPF</sequence>
<comment type="subunit">
    <text evidence="1">Homotetramer.</text>
</comment>
<name>SSB2_LISIN</name>
<keyword id="KW-0238">DNA-binding</keyword>
<gene>
    <name type="primary">ssb2</name>
    <name type="ordered locus">lin0097</name>
</gene>
<proteinExistence type="inferred from homology"/>
<dbReference type="EMBL" id="AL596163">
    <property type="protein sequence ID" value="CAC95330.1"/>
    <property type="molecule type" value="Genomic_DNA"/>
</dbReference>
<dbReference type="PIR" id="AB1445">
    <property type="entry name" value="AB1445"/>
</dbReference>
<dbReference type="SMR" id="Q92FK7"/>
<dbReference type="STRING" id="272626.gene:17564409"/>
<dbReference type="KEGG" id="lin:lin0097"/>
<dbReference type="eggNOG" id="COG0629">
    <property type="taxonomic scope" value="Bacteria"/>
</dbReference>
<dbReference type="HOGENOM" id="CLU_078758_6_2_9"/>
<dbReference type="OrthoDB" id="9809878at2"/>
<dbReference type="Proteomes" id="UP000002513">
    <property type="component" value="Chromosome"/>
</dbReference>
<dbReference type="GO" id="GO:0009295">
    <property type="term" value="C:nucleoid"/>
    <property type="evidence" value="ECO:0007669"/>
    <property type="project" value="TreeGrafter"/>
</dbReference>
<dbReference type="GO" id="GO:0003697">
    <property type="term" value="F:single-stranded DNA binding"/>
    <property type="evidence" value="ECO:0007669"/>
    <property type="project" value="UniProtKB-UniRule"/>
</dbReference>
<dbReference type="GO" id="GO:0006260">
    <property type="term" value="P:DNA replication"/>
    <property type="evidence" value="ECO:0007669"/>
    <property type="project" value="InterPro"/>
</dbReference>
<dbReference type="CDD" id="cd04496">
    <property type="entry name" value="SSB_OBF"/>
    <property type="match status" value="1"/>
</dbReference>
<dbReference type="FunFam" id="2.40.50.140:FF:000084">
    <property type="entry name" value="Single-stranded DNA-binding protein"/>
    <property type="match status" value="1"/>
</dbReference>
<dbReference type="Gene3D" id="2.40.50.140">
    <property type="entry name" value="Nucleic acid-binding proteins"/>
    <property type="match status" value="1"/>
</dbReference>
<dbReference type="HAMAP" id="MF_00984">
    <property type="entry name" value="SSB"/>
    <property type="match status" value="1"/>
</dbReference>
<dbReference type="InterPro" id="IPR012340">
    <property type="entry name" value="NA-bd_OB-fold"/>
</dbReference>
<dbReference type="InterPro" id="IPR000424">
    <property type="entry name" value="Primosome_PriB/ssb"/>
</dbReference>
<dbReference type="InterPro" id="IPR011344">
    <property type="entry name" value="ssDNA-bd"/>
</dbReference>
<dbReference type="NCBIfam" id="TIGR00621">
    <property type="entry name" value="ssb"/>
    <property type="match status" value="1"/>
</dbReference>
<dbReference type="PANTHER" id="PTHR10302">
    <property type="entry name" value="SINGLE-STRANDED DNA-BINDING PROTEIN"/>
    <property type="match status" value="1"/>
</dbReference>
<dbReference type="PANTHER" id="PTHR10302:SF27">
    <property type="entry name" value="SINGLE-STRANDED DNA-BINDING PROTEIN"/>
    <property type="match status" value="1"/>
</dbReference>
<dbReference type="Pfam" id="PF00436">
    <property type="entry name" value="SSB"/>
    <property type="match status" value="1"/>
</dbReference>
<dbReference type="PIRSF" id="PIRSF002070">
    <property type="entry name" value="SSB"/>
    <property type="match status" value="1"/>
</dbReference>
<dbReference type="SUPFAM" id="SSF50249">
    <property type="entry name" value="Nucleic acid-binding proteins"/>
    <property type="match status" value="1"/>
</dbReference>
<dbReference type="PROSITE" id="PS50935">
    <property type="entry name" value="SSB"/>
    <property type="match status" value="1"/>
</dbReference>